<name>SYFA_DECAR</name>
<proteinExistence type="inferred from homology"/>
<sequence>MENLDQIVSEAQVAFAAISDPDALEQVKARFLGKSGQITELLKGLGKLPPEEKKTAGAAINVAKTAVETALNERREAIRKAALDARLAEEALDVTLPGRAEARGGLHPVTRTLERIESLFASIGFEVADGPEIEEDFYNFTAMNTPEDHPARSMHDTFYLQNSDGTLADKVLLRTHTSPIQARYMQAHVKRYGQLGKMPEIRIIAPGRVYRVDSDATHSPMFHQVEGLWVGEGVSFADLKGVIANFLKSFFETDDLTVRFRPSFFPFTEPSAEIDVAFMSGALKGRWLEIAGCGMVHPNVLRIAGIDPEKYTGFAFGFGQDRLTMLRYGINDLRLFFEGDLRFLRQFN</sequence>
<organism>
    <name type="scientific">Dechloromonas aromatica (strain RCB)</name>
    <dbReference type="NCBI Taxonomy" id="159087"/>
    <lineage>
        <taxon>Bacteria</taxon>
        <taxon>Pseudomonadati</taxon>
        <taxon>Pseudomonadota</taxon>
        <taxon>Betaproteobacteria</taxon>
        <taxon>Rhodocyclales</taxon>
        <taxon>Azonexaceae</taxon>
        <taxon>Dechloromonas</taxon>
    </lineage>
</organism>
<dbReference type="EC" id="6.1.1.20" evidence="1"/>
<dbReference type="EMBL" id="CP000089">
    <property type="protein sequence ID" value="AAZ47403.1"/>
    <property type="molecule type" value="Genomic_DNA"/>
</dbReference>
<dbReference type="SMR" id="Q47CM8"/>
<dbReference type="STRING" id="159087.Daro_2673"/>
<dbReference type="KEGG" id="dar:Daro_2673"/>
<dbReference type="eggNOG" id="COG0016">
    <property type="taxonomic scope" value="Bacteria"/>
</dbReference>
<dbReference type="HOGENOM" id="CLU_025086_0_1_4"/>
<dbReference type="OrthoDB" id="9800719at2"/>
<dbReference type="GO" id="GO:0005737">
    <property type="term" value="C:cytoplasm"/>
    <property type="evidence" value="ECO:0007669"/>
    <property type="project" value="UniProtKB-SubCell"/>
</dbReference>
<dbReference type="GO" id="GO:0005524">
    <property type="term" value="F:ATP binding"/>
    <property type="evidence" value="ECO:0007669"/>
    <property type="project" value="UniProtKB-UniRule"/>
</dbReference>
<dbReference type="GO" id="GO:0000287">
    <property type="term" value="F:magnesium ion binding"/>
    <property type="evidence" value="ECO:0007669"/>
    <property type="project" value="UniProtKB-UniRule"/>
</dbReference>
<dbReference type="GO" id="GO:0004826">
    <property type="term" value="F:phenylalanine-tRNA ligase activity"/>
    <property type="evidence" value="ECO:0007669"/>
    <property type="project" value="UniProtKB-UniRule"/>
</dbReference>
<dbReference type="GO" id="GO:0000049">
    <property type="term" value="F:tRNA binding"/>
    <property type="evidence" value="ECO:0007669"/>
    <property type="project" value="InterPro"/>
</dbReference>
<dbReference type="GO" id="GO:0006432">
    <property type="term" value="P:phenylalanyl-tRNA aminoacylation"/>
    <property type="evidence" value="ECO:0007669"/>
    <property type="project" value="UniProtKB-UniRule"/>
</dbReference>
<dbReference type="CDD" id="cd00496">
    <property type="entry name" value="PheRS_alpha_core"/>
    <property type="match status" value="1"/>
</dbReference>
<dbReference type="FunFam" id="3.30.930.10:FF:000003">
    <property type="entry name" value="Phenylalanine--tRNA ligase alpha subunit"/>
    <property type="match status" value="1"/>
</dbReference>
<dbReference type="Gene3D" id="3.30.930.10">
    <property type="entry name" value="Bira Bifunctional Protein, Domain 2"/>
    <property type="match status" value="1"/>
</dbReference>
<dbReference type="HAMAP" id="MF_00281">
    <property type="entry name" value="Phe_tRNA_synth_alpha1"/>
    <property type="match status" value="1"/>
</dbReference>
<dbReference type="InterPro" id="IPR006195">
    <property type="entry name" value="aa-tRNA-synth_II"/>
</dbReference>
<dbReference type="InterPro" id="IPR045864">
    <property type="entry name" value="aa-tRNA-synth_II/BPL/LPL"/>
</dbReference>
<dbReference type="InterPro" id="IPR004529">
    <property type="entry name" value="Phe-tRNA-synth_IIc_asu"/>
</dbReference>
<dbReference type="InterPro" id="IPR004188">
    <property type="entry name" value="Phe-tRNA_ligase_II_N"/>
</dbReference>
<dbReference type="InterPro" id="IPR022911">
    <property type="entry name" value="Phe_tRNA_ligase_alpha1_bac"/>
</dbReference>
<dbReference type="InterPro" id="IPR002319">
    <property type="entry name" value="Phenylalanyl-tRNA_Synthase"/>
</dbReference>
<dbReference type="InterPro" id="IPR010978">
    <property type="entry name" value="tRNA-bd_arm"/>
</dbReference>
<dbReference type="NCBIfam" id="TIGR00468">
    <property type="entry name" value="pheS"/>
    <property type="match status" value="1"/>
</dbReference>
<dbReference type="PANTHER" id="PTHR11538:SF41">
    <property type="entry name" value="PHENYLALANINE--TRNA LIGASE, MITOCHONDRIAL"/>
    <property type="match status" value="1"/>
</dbReference>
<dbReference type="PANTHER" id="PTHR11538">
    <property type="entry name" value="PHENYLALANYL-TRNA SYNTHETASE"/>
    <property type="match status" value="1"/>
</dbReference>
<dbReference type="Pfam" id="PF02912">
    <property type="entry name" value="Phe_tRNA-synt_N"/>
    <property type="match status" value="1"/>
</dbReference>
<dbReference type="Pfam" id="PF01409">
    <property type="entry name" value="tRNA-synt_2d"/>
    <property type="match status" value="1"/>
</dbReference>
<dbReference type="SUPFAM" id="SSF55681">
    <property type="entry name" value="Class II aaRS and biotin synthetases"/>
    <property type="match status" value="1"/>
</dbReference>
<dbReference type="SUPFAM" id="SSF46589">
    <property type="entry name" value="tRNA-binding arm"/>
    <property type="match status" value="1"/>
</dbReference>
<dbReference type="PROSITE" id="PS50862">
    <property type="entry name" value="AA_TRNA_LIGASE_II"/>
    <property type="match status" value="1"/>
</dbReference>
<protein>
    <recommendedName>
        <fullName evidence="1">Phenylalanine--tRNA ligase alpha subunit</fullName>
        <ecNumber evidence="1">6.1.1.20</ecNumber>
    </recommendedName>
    <alternativeName>
        <fullName evidence="1">Phenylalanyl-tRNA synthetase alpha subunit</fullName>
        <shortName evidence="1">PheRS</shortName>
    </alternativeName>
</protein>
<accession>Q47CM8</accession>
<comment type="catalytic activity">
    <reaction evidence="1">
        <text>tRNA(Phe) + L-phenylalanine + ATP = L-phenylalanyl-tRNA(Phe) + AMP + diphosphate + H(+)</text>
        <dbReference type="Rhea" id="RHEA:19413"/>
        <dbReference type="Rhea" id="RHEA-COMP:9668"/>
        <dbReference type="Rhea" id="RHEA-COMP:9699"/>
        <dbReference type="ChEBI" id="CHEBI:15378"/>
        <dbReference type="ChEBI" id="CHEBI:30616"/>
        <dbReference type="ChEBI" id="CHEBI:33019"/>
        <dbReference type="ChEBI" id="CHEBI:58095"/>
        <dbReference type="ChEBI" id="CHEBI:78442"/>
        <dbReference type="ChEBI" id="CHEBI:78531"/>
        <dbReference type="ChEBI" id="CHEBI:456215"/>
        <dbReference type="EC" id="6.1.1.20"/>
    </reaction>
</comment>
<comment type="cofactor">
    <cofactor evidence="1">
        <name>Mg(2+)</name>
        <dbReference type="ChEBI" id="CHEBI:18420"/>
    </cofactor>
    <text evidence="1">Binds 2 magnesium ions per tetramer.</text>
</comment>
<comment type="subunit">
    <text evidence="1">Tetramer of two alpha and two beta subunits.</text>
</comment>
<comment type="subcellular location">
    <subcellularLocation>
        <location evidence="1">Cytoplasm</location>
    </subcellularLocation>
</comment>
<comment type="similarity">
    <text evidence="1">Belongs to the class-II aminoacyl-tRNA synthetase family. Phe-tRNA synthetase alpha subunit type 1 subfamily.</text>
</comment>
<keyword id="KW-0030">Aminoacyl-tRNA synthetase</keyword>
<keyword id="KW-0067">ATP-binding</keyword>
<keyword id="KW-0963">Cytoplasm</keyword>
<keyword id="KW-0436">Ligase</keyword>
<keyword id="KW-0460">Magnesium</keyword>
<keyword id="KW-0479">Metal-binding</keyword>
<keyword id="KW-0547">Nucleotide-binding</keyword>
<keyword id="KW-0648">Protein biosynthesis</keyword>
<feature type="chain" id="PRO_0000231977" description="Phenylalanine--tRNA ligase alpha subunit">
    <location>
        <begin position="1"/>
        <end position="348"/>
    </location>
</feature>
<feature type="binding site" evidence="1">
    <location>
        <position position="269"/>
    </location>
    <ligand>
        <name>Mg(2+)</name>
        <dbReference type="ChEBI" id="CHEBI:18420"/>
        <note>shared with beta subunit</note>
    </ligand>
</feature>
<gene>
    <name evidence="1" type="primary">pheS</name>
    <name type="ordered locus">Daro_2673</name>
</gene>
<evidence type="ECO:0000255" key="1">
    <source>
        <dbReference type="HAMAP-Rule" id="MF_00281"/>
    </source>
</evidence>
<reference key="1">
    <citation type="journal article" date="2009" name="BMC Genomics">
        <title>Metabolic analysis of the soil microbe Dechloromonas aromatica str. RCB: indications of a surprisingly complex life-style and cryptic anaerobic pathways for aromatic degradation.</title>
        <authorList>
            <person name="Salinero K.K."/>
            <person name="Keller K."/>
            <person name="Feil W.S."/>
            <person name="Feil H."/>
            <person name="Trong S."/>
            <person name="Di Bartolo G."/>
            <person name="Lapidus A."/>
        </authorList>
    </citation>
    <scope>NUCLEOTIDE SEQUENCE [LARGE SCALE GENOMIC DNA]</scope>
    <source>
        <strain>RCB</strain>
    </source>
</reference>